<evidence type="ECO:0000255" key="1">
    <source>
        <dbReference type="HAMAP-Rule" id="MF_01804"/>
    </source>
</evidence>
<sequence length="197" mass="22441">MSINVKSVIEAALFIAGNEGVHKDKLKSISRLSVQDFEAVMEEMIFEYEKDPQRGLVVRKVGENYKLFTKPDISKIVASGFGIKQKNPLNQGMIETLAIIAYNHPCTRSQIHELRKTDPTPMLEKLIEIGLVEEAGRSEAVGKPYLYQVTPKFYDIFGLDSIKDLPEIVLPEQKIEELTYEEEINFFDTNREDNGDE</sequence>
<organism>
    <name type="scientific">Malacoplasma penetrans (strain HF-2)</name>
    <name type="common">Mycoplasma penetrans</name>
    <dbReference type="NCBI Taxonomy" id="272633"/>
    <lineage>
        <taxon>Bacteria</taxon>
        <taxon>Bacillati</taxon>
        <taxon>Mycoplasmatota</taxon>
        <taxon>Mycoplasmoidales</taxon>
        <taxon>Mycoplasmoidaceae</taxon>
        <taxon>Malacoplasma</taxon>
    </lineage>
</organism>
<name>SCPB_MALP2</name>
<reference key="1">
    <citation type="journal article" date="2002" name="Nucleic Acids Res.">
        <title>The complete genomic sequence of Mycoplasma penetrans, an intracellular bacterial pathogen in humans.</title>
        <authorList>
            <person name="Sasaki Y."/>
            <person name="Ishikawa J."/>
            <person name="Yamashita A."/>
            <person name="Oshima K."/>
            <person name="Kenri T."/>
            <person name="Furuya K."/>
            <person name="Yoshino C."/>
            <person name="Horino A."/>
            <person name="Shiba T."/>
            <person name="Sasaki T."/>
            <person name="Hattori M."/>
        </authorList>
    </citation>
    <scope>NUCLEOTIDE SEQUENCE [LARGE SCALE GENOMIC DNA]</scope>
    <source>
        <strain>HF-2</strain>
    </source>
</reference>
<dbReference type="EMBL" id="BA000026">
    <property type="protein sequence ID" value="BAC43829.1"/>
    <property type="molecule type" value="Genomic_DNA"/>
</dbReference>
<dbReference type="RefSeq" id="WP_011076865.1">
    <property type="nucleotide sequence ID" value="NC_004432.1"/>
</dbReference>
<dbReference type="SMR" id="Q8EX11"/>
<dbReference type="FunCoup" id="Q8EX11">
    <property type="interactions" value="140"/>
</dbReference>
<dbReference type="STRING" id="272633.gene:10731130"/>
<dbReference type="KEGG" id="mpe:MYPE390"/>
<dbReference type="eggNOG" id="COG1386">
    <property type="taxonomic scope" value="Bacteria"/>
</dbReference>
<dbReference type="HOGENOM" id="CLU_045647_5_3_14"/>
<dbReference type="InParanoid" id="Q8EX11"/>
<dbReference type="Proteomes" id="UP000002522">
    <property type="component" value="Chromosome"/>
</dbReference>
<dbReference type="GO" id="GO:0005737">
    <property type="term" value="C:cytoplasm"/>
    <property type="evidence" value="ECO:0007669"/>
    <property type="project" value="UniProtKB-SubCell"/>
</dbReference>
<dbReference type="GO" id="GO:0051301">
    <property type="term" value="P:cell division"/>
    <property type="evidence" value="ECO:0007669"/>
    <property type="project" value="UniProtKB-KW"/>
</dbReference>
<dbReference type="GO" id="GO:0051304">
    <property type="term" value="P:chromosome separation"/>
    <property type="evidence" value="ECO:0007669"/>
    <property type="project" value="InterPro"/>
</dbReference>
<dbReference type="GO" id="GO:0006260">
    <property type="term" value="P:DNA replication"/>
    <property type="evidence" value="ECO:0007669"/>
    <property type="project" value="UniProtKB-UniRule"/>
</dbReference>
<dbReference type="Gene3D" id="1.10.10.10">
    <property type="entry name" value="Winged helix-like DNA-binding domain superfamily/Winged helix DNA-binding domain"/>
    <property type="match status" value="2"/>
</dbReference>
<dbReference type="HAMAP" id="MF_01804">
    <property type="entry name" value="ScpB"/>
    <property type="match status" value="1"/>
</dbReference>
<dbReference type="InterPro" id="IPR005234">
    <property type="entry name" value="ScpB_csome_segregation"/>
</dbReference>
<dbReference type="InterPro" id="IPR036388">
    <property type="entry name" value="WH-like_DNA-bd_sf"/>
</dbReference>
<dbReference type="InterPro" id="IPR036390">
    <property type="entry name" value="WH_DNA-bd_sf"/>
</dbReference>
<dbReference type="NCBIfam" id="TIGR00281">
    <property type="entry name" value="SMC-Scp complex subunit ScpB"/>
    <property type="match status" value="1"/>
</dbReference>
<dbReference type="PANTHER" id="PTHR34298">
    <property type="entry name" value="SEGREGATION AND CONDENSATION PROTEIN B"/>
    <property type="match status" value="1"/>
</dbReference>
<dbReference type="PANTHER" id="PTHR34298:SF2">
    <property type="entry name" value="SEGREGATION AND CONDENSATION PROTEIN B"/>
    <property type="match status" value="1"/>
</dbReference>
<dbReference type="Pfam" id="PF04079">
    <property type="entry name" value="SMC_ScpB"/>
    <property type="match status" value="1"/>
</dbReference>
<dbReference type="PIRSF" id="PIRSF019345">
    <property type="entry name" value="ScpB"/>
    <property type="match status" value="1"/>
</dbReference>
<dbReference type="SUPFAM" id="SSF46785">
    <property type="entry name" value="Winged helix' DNA-binding domain"/>
    <property type="match status" value="2"/>
</dbReference>
<protein>
    <recommendedName>
        <fullName evidence="1">Segregation and condensation protein B</fullName>
    </recommendedName>
</protein>
<gene>
    <name evidence="1" type="primary">scpB</name>
    <name type="ordered locus">MYPE390</name>
</gene>
<proteinExistence type="inferred from homology"/>
<keyword id="KW-0131">Cell cycle</keyword>
<keyword id="KW-0132">Cell division</keyword>
<keyword id="KW-0159">Chromosome partition</keyword>
<keyword id="KW-0963">Cytoplasm</keyword>
<keyword id="KW-1185">Reference proteome</keyword>
<comment type="function">
    <text evidence="1">Participates in chromosomal partition during cell division. May act via the formation of a condensin-like complex containing Smc and ScpA that pull DNA away from mid-cell into both cell halves.</text>
</comment>
<comment type="subunit">
    <text evidence="1">Homodimer. Homodimerization may be required to stabilize the binding of ScpA to the Smc head domains. Component of a cohesin-like complex composed of ScpA, ScpB and the Smc homodimer, in which ScpA and ScpB bind to the head domain of Smc. The presence of the three proteins is required for the association of the complex with DNA.</text>
</comment>
<comment type="subcellular location">
    <subcellularLocation>
        <location evidence="1">Cytoplasm</location>
    </subcellularLocation>
    <text evidence="1">Associated with two foci at the outer edges of the nucleoid region in young cells, and at four foci within both cell halves in older cells.</text>
</comment>
<comment type="similarity">
    <text evidence="1">Belongs to the ScpB family.</text>
</comment>
<feature type="chain" id="PRO_0000211141" description="Segregation and condensation protein B">
    <location>
        <begin position="1"/>
        <end position="197"/>
    </location>
</feature>
<accession>Q8EX11</accession>